<keyword id="KW-0004">4Fe-4S</keyword>
<keyword id="KW-0997">Cell inner membrane</keyword>
<keyword id="KW-1003">Cell membrane</keyword>
<keyword id="KW-0249">Electron transport</keyword>
<keyword id="KW-0408">Iron</keyword>
<keyword id="KW-0411">Iron-sulfur</keyword>
<keyword id="KW-0472">Membrane</keyword>
<keyword id="KW-0479">Metal-binding</keyword>
<keyword id="KW-1185">Reference proteome</keyword>
<keyword id="KW-0677">Repeat</keyword>
<keyword id="KW-1278">Translocase</keyword>
<keyword id="KW-0813">Transport</keyword>
<protein>
    <recommendedName>
        <fullName evidence="1">Ion-translocating oxidoreductase complex subunit B</fullName>
        <ecNumber evidence="1">7.-.-.-</ecNumber>
    </recommendedName>
    <alternativeName>
        <fullName evidence="1">Rnf electron transport complex subunit B</fullName>
    </alternativeName>
</protein>
<dbReference type="EC" id="7.-.-.-" evidence="1"/>
<dbReference type="EMBL" id="CP000606">
    <property type="protein sequence ID" value="ABO23933.1"/>
    <property type="molecule type" value="Genomic_DNA"/>
</dbReference>
<dbReference type="RefSeq" id="WP_011865865.1">
    <property type="nucleotide sequence ID" value="NC_009092.1"/>
</dbReference>
<dbReference type="SMR" id="A3QEN5"/>
<dbReference type="STRING" id="323850.Shew_2067"/>
<dbReference type="KEGG" id="slo:Shew_2067"/>
<dbReference type="eggNOG" id="COG2878">
    <property type="taxonomic scope" value="Bacteria"/>
</dbReference>
<dbReference type="HOGENOM" id="CLU_063448_2_0_6"/>
<dbReference type="OrthoDB" id="9789936at2"/>
<dbReference type="Proteomes" id="UP000001558">
    <property type="component" value="Chromosome"/>
</dbReference>
<dbReference type="GO" id="GO:0005886">
    <property type="term" value="C:plasma membrane"/>
    <property type="evidence" value="ECO:0007669"/>
    <property type="project" value="UniProtKB-SubCell"/>
</dbReference>
<dbReference type="GO" id="GO:0051539">
    <property type="term" value="F:4 iron, 4 sulfur cluster binding"/>
    <property type="evidence" value="ECO:0007669"/>
    <property type="project" value="UniProtKB-UniRule"/>
</dbReference>
<dbReference type="GO" id="GO:0009055">
    <property type="term" value="F:electron transfer activity"/>
    <property type="evidence" value="ECO:0007669"/>
    <property type="project" value="InterPro"/>
</dbReference>
<dbReference type="GO" id="GO:0046872">
    <property type="term" value="F:metal ion binding"/>
    <property type="evidence" value="ECO:0007669"/>
    <property type="project" value="UniProtKB-KW"/>
</dbReference>
<dbReference type="GO" id="GO:0022900">
    <property type="term" value="P:electron transport chain"/>
    <property type="evidence" value="ECO:0007669"/>
    <property type="project" value="UniProtKB-UniRule"/>
</dbReference>
<dbReference type="FunFam" id="1.10.15.40:FF:000001">
    <property type="entry name" value="Ion-translocating oxidoreductase complex subunit B"/>
    <property type="match status" value="1"/>
</dbReference>
<dbReference type="Gene3D" id="3.30.70.20">
    <property type="match status" value="2"/>
</dbReference>
<dbReference type="Gene3D" id="1.10.15.40">
    <property type="entry name" value="Electron transport complex subunit B, putative Fe-S cluster"/>
    <property type="match status" value="1"/>
</dbReference>
<dbReference type="HAMAP" id="MF_00463">
    <property type="entry name" value="RsxB_RnfB"/>
    <property type="match status" value="1"/>
</dbReference>
<dbReference type="InterPro" id="IPR007202">
    <property type="entry name" value="4Fe-4S_dom"/>
</dbReference>
<dbReference type="InterPro" id="IPR017896">
    <property type="entry name" value="4Fe4S_Fe-S-bd"/>
</dbReference>
<dbReference type="InterPro" id="IPR017900">
    <property type="entry name" value="4Fe4S_Fe_S_CS"/>
</dbReference>
<dbReference type="InterPro" id="IPR010207">
    <property type="entry name" value="Elect_transpt_cplx_RnfB/RsxB"/>
</dbReference>
<dbReference type="InterPro" id="IPR016463">
    <property type="entry name" value="RnfB/RsxB_Proteobac"/>
</dbReference>
<dbReference type="InterPro" id="IPR050294">
    <property type="entry name" value="RnfB_subfamily"/>
</dbReference>
<dbReference type="NCBIfam" id="NF003475">
    <property type="entry name" value="PRK05113.1"/>
    <property type="match status" value="1"/>
</dbReference>
<dbReference type="NCBIfam" id="TIGR01944">
    <property type="entry name" value="rnfB"/>
    <property type="match status" value="1"/>
</dbReference>
<dbReference type="PANTHER" id="PTHR42859:SF3">
    <property type="entry name" value="ION-TRANSLOCATING OXIDOREDUCTASE COMPLEX SUBUNIT B"/>
    <property type="match status" value="1"/>
</dbReference>
<dbReference type="PANTHER" id="PTHR42859">
    <property type="entry name" value="OXIDOREDUCTASE"/>
    <property type="match status" value="1"/>
</dbReference>
<dbReference type="Pfam" id="PF14697">
    <property type="entry name" value="Fer4_21"/>
    <property type="match status" value="1"/>
</dbReference>
<dbReference type="Pfam" id="PF04060">
    <property type="entry name" value="FeS"/>
    <property type="match status" value="1"/>
</dbReference>
<dbReference type="PIRSF" id="PIRSF005784">
    <property type="entry name" value="Elect_transpt_RnfB"/>
    <property type="match status" value="1"/>
</dbReference>
<dbReference type="SUPFAM" id="SSF54862">
    <property type="entry name" value="4Fe-4S ferredoxins"/>
    <property type="match status" value="1"/>
</dbReference>
<dbReference type="PROSITE" id="PS51656">
    <property type="entry name" value="4FE4S"/>
    <property type="match status" value="1"/>
</dbReference>
<dbReference type="PROSITE" id="PS00198">
    <property type="entry name" value="4FE4S_FER_1"/>
    <property type="match status" value="2"/>
</dbReference>
<dbReference type="PROSITE" id="PS51379">
    <property type="entry name" value="4FE4S_FER_2"/>
    <property type="match status" value="2"/>
</dbReference>
<accession>A3QEN5</accession>
<evidence type="ECO:0000255" key="1">
    <source>
        <dbReference type="HAMAP-Rule" id="MF_00463"/>
    </source>
</evidence>
<reference key="1">
    <citation type="submission" date="2007-03" db="EMBL/GenBank/DDBJ databases">
        <title>Complete sequence of Shewanella loihica PV-4.</title>
        <authorList>
            <consortium name="US DOE Joint Genome Institute"/>
            <person name="Copeland A."/>
            <person name="Lucas S."/>
            <person name="Lapidus A."/>
            <person name="Barry K."/>
            <person name="Detter J.C."/>
            <person name="Glavina del Rio T."/>
            <person name="Hammon N."/>
            <person name="Israni S."/>
            <person name="Dalin E."/>
            <person name="Tice H."/>
            <person name="Pitluck S."/>
            <person name="Chain P."/>
            <person name="Malfatti S."/>
            <person name="Shin M."/>
            <person name="Vergez L."/>
            <person name="Schmutz J."/>
            <person name="Larimer F."/>
            <person name="Land M."/>
            <person name="Hauser L."/>
            <person name="Kyrpides N."/>
            <person name="Mikhailova N."/>
            <person name="Romine M.F."/>
            <person name="Serres G."/>
            <person name="Fredrickson J."/>
            <person name="Tiedje J."/>
            <person name="Richardson P."/>
        </authorList>
    </citation>
    <scope>NUCLEOTIDE SEQUENCE [LARGE SCALE GENOMIC DNA]</scope>
    <source>
        <strain>ATCC BAA-1088 / PV-4</strain>
    </source>
</reference>
<gene>
    <name evidence="1" type="primary">rnfB</name>
    <name type="ordered locus">Shew_2067</name>
</gene>
<organism>
    <name type="scientific">Shewanella loihica (strain ATCC BAA-1088 / PV-4)</name>
    <dbReference type="NCBI Taxonomy" id="323850"/>
    <lineage>
        <taxon>Bacteria</taxon>
        <taxon>Pseudomonadati</taxon>
        <taxon>Pseudomonadota</taxon>
        <taxon>Gammaproteobacteria</taxon>
        <taxon>Alteromonadales</taxon>
        <taxon>Shewanellaceae</taxon>
        <taxon>Shewanella</taxon>
    </lineage>
</organism>
<feature type="chain" id="PRO_1000013653" description="Ion-translocating oxidoreductase complex subunit B">
    <location>
        <begin position="1"/>
        <end position="189"/>
    </location>
</feature>
<feature type="domain" description="4Fe-4S" evidence="1">
    <location>
        <begin position="32"/>
        <end position="90"/>
    </location>
</feature>
<feature type="domain" description="4Fe-4S ferredoxin-type 1" evidence="1">
    <location>
        <begin position="105"/>
        <end position="134"/>
    </location>
</feature>
<feature type="domain" description="4Fe-4S ferredoxin-type 2" evidence="1">
    <location>
        <begin position="135"/>
        <end position="164"/>
    </location>
</feature>
<feature type="region of interest" description="Hydrophobic" evidence="1">
    <location>
        <begin position="1"/>
        <end position="26"/>
    </location>
</feature>
<feature type="binding site" evidence="1">
    <location>
        <position position="49"/>
    </location>
    <ligand>
        <name>[4Fe-4S] cluster</name>
        <dbReference type="ChEBI" id="CHEBI:49883"/>
        <label>1</label>
    </ligand>
</feature>
<feature type="binding site" evidence="1">
    <location>
        <position position="52"/>
    </location>
    <ligand>
        <name>[4Fe-4S] cluster</name>
        <dbReference type="ChEBI" id="CHEBI:49883"/>
        <label>1</label>
    </ligand>
</feature>
<feature type="binding site" evidence="1">
    <location>
        <position position="57"/>
    </location>
    <ligand>
        <name>[4Fe-4S] cluster</name>
        <dbReference type="ChEBI" id="CHEBI:49883"/>
        <label>1</label>
    </ligand>
</feature>
<feature type="binding site" evidence="1">
    <location>
        <position position="73"/>
    </location>
    <ligand>
        <name>[4Fe-4S] cluster</name>
        <dbReference type="ChEBI" id="CHEBI:49883"/>
        <label>1</label>
    </ligand>
</feature>
<feature type="binding site" evidence="1">
    <location>
        <position position="114"/>
    </location>
    <ligand>
        <name>[4Fe-4S] cluster</name>
        <dbReference type="ChEBI" id="CHEBI:49883"/>
        <label>2</label>
    </ligand>
</feature>
<feature type="binding site" evidence="1">
    <location>
        <position position="117"/>
    </location>
    <ligand>
        <name>[4Fe-4S] cluster</name>
        <dbReference type="ChEBI" id="CHEBI:49883"/>
        <label>2</label>
    </ligand>
</feature>
<feature type="binding site" evidence="1">
    <location>
        <position position="120"/>
    </location>
    <ligand>
        <name>[4Fe-4S] cluster</name>
        <dbReference type="ChEBI" id="CHEBI:49883"/>
        <label>2</label>
    </ligand>
</feature>
<feature type="binding site" evidence="1">
    <location>
        <position position="124"/>
    </location>
    <ligand>
        <name>[4Fe-4S] cluster</name>
        <dbReference type="ChEBI" id="CHEBI:49883"/>
        <label>3</label>
    </ligand>
</feature>
<feature type="binding site" evidence="1">
    <location>
        <position position="144"/>
    </location>
    <ligand>
        <name>[4Fe-4S] cluster</name>
        <dbReference type="ChEBI" id="CHEBI:49883"/>
        <label>3</label>
    </ligand>
</feature>
<feature type="binding site" evidence="1">
    <location>
        <position position="147"/>
    </location>
    <ligand>
        <name>[4Fe-4S] cluster</name>
        <dbReference type="ChEBI" id="CHEBI:49883"/>
        <label>3</label>
    </ligand>
</feature>
<feature type="binding site" evidence="1">
    <location>
        <position position="150"/>
    </location>
    <ligand>
        <name>[4Fe-4S] cluster</name>
        <dbReference type="ChEBI" id="CHEBI:49883"/>
        <label>3</label>
    </ligand>
</feature>
<feature type="binding site" evidence="1">
    <location>
        <position position="154"/>
    </location>
    <ligand>
        <name>[4Fe-4S] cluster</name>
        <dbReference type="ChEBI" id="CHEBI:49883"/>
        <label>2</label>
    </ligand>
</feature>
<name>RNFB_SHELP</name>
<proteinExistence type="inferred from homology"/>
<sequence length="189" mass="20134">MSQVIIAIILLGLLALAFGALLGYAAEKFKVEGDPIIDQAEALLPQTQCGQCGYPGCRPYAEAIANGEKINKCPPGGTATMEKLAELMGVDPEPLTANAETQVKKVAFIREAECIGCTKCIQACPVDAILGTGKQMHTVITDYCTGCDLCVEPCPVDCIDMIPVAETLQNWSWQLNAIPVVNISEESKC</sequence>
<comment type="function">
    <text evidence="1">Part of a membrane-bound complex that couples electron transfer with translocation of ions across the membrane.</text>
</comment>
<comment type="cofactor">
    <cofactor evidence="1">
        <name>[4Fe-4S] cluster</name>
        <dbReference type="ChEBI" id="CHEBI:49883"/>
    </cofactor>
    <text evidence="1">Binds 3 [4Fe-4S] clusters.</text>
</comment>
<comment type="subunit">
    <text evidence="1">The complex is composed of six subunits: RnfA, RnfB, RnfC, RnfD, RnfE and RnfG.</text>
</comment>
<comment type="subcellular location">
    <subcellularLocation>
        <location evidence="1">Cell inner membrane</location>
    </subcellularLocation>
</comment>
<comment type="similarity">
    <text evidence="1">Belongs to the 4Fe4S bacterial-type ferredoxin family. RnfB subfamily.</text>
</comment>